<protein>
    <recommendedName>
        <fullName evidence="1">Histidine--tRNA ligase</fullName>
        <ecNumber evidence="1">6.1.1.21</ecNumber>
    </recommendedName>
    <alternativeName>
        <fullName evidence="1">Histidyl-tRNA synthetase</fullName>
        <shortName evidence="1">HisRS</shortName>
    </alternativeName>
</protein>
<organism>
    <name type="scientific">Pseudomonas fluorescens (strain SBW25)</name>
    <dbReference type="NCBI Taxonomy" id="216595"/>
    <lineage>
        <taxon>Bacteria</taxon>
        <taxon>Pseudomonadati</taxon>
        <taxon>Pseudomonadota</taxon>
        <taxon>Gammaproteobacteria</taxon>
        <taxon>Pseudomonadales</taxon>
        <taxon>Pseudomonadaceae</taxon>
        <taxon>Pseudomonas</taxon>
    </lineage>
</organism>
<name>SYH_PSEFS</name>
<reference key="1">
    <citation type="journal article" date="2009" name="Genome Biol.">
        <title>Genomic and genetic analyses of diversity and plant interactions of Pseudomonas fluorescens.</title>
        <authorList>
            <person name="Silby M.W."/>
            <person name="Cerdeno-Tarraga A.M."/>
            <person name="Vernikos G.S."/>
            <person name="Giddens S.R."/>
            <person name="Jackson R.W."/>
            <person name="Preston G.M."/>
            <person name="Zhang X.-X."/>
            <person name="Moon C.D."/>
            <person name="Gehrig S.M."/>
            <person name="Godfrey S.A.C."/>
            <person name="Knight C.G."/>
            <person name="Malone J.G."/>
            <person name="Robinson Z."/>
            <person name="Spiers A.J."/>
            <person name="Harris S."/>
            <person name="Challis G.L."/>
            <person name="Yaxley A.M."/>
            <person name="Harris D."/>
            <person name="Seeger K."/>
            <person name="Murphy L."/>
            <person name="Rutter S."/>
            <person name="Squares R."/>
            <person name="Quail M.A."/>
            <person name="Saunders E."/>
            <person name="Mavromatis K."/>
            <person name="Brettin T.S."/>
            <person name="Bentley S.D."/>
            <person name="Hothersall J."/>
            <person name="Stephens E."/>
            <person name="Thomas C.M."/>
            <person name="Parkhill J."/>
            <person name="Levy S.B."/>
            <person name="Rainey P.B."/>
            <person name="Thomson N.R."/>
        </authorList>
    </citation>
    <scope>NUCLEOTIDE SEQUENCE [LARGE SCALE GENOMIC DNA]</scope>
    <source>
        <strain>SBW25</strain>
    </source>
</reference>
<proteinExistence type="inferred from homology"/>
<accession>C3K1L3</accession>
<comment type="catalytic activity">
    <reaction evidence="1">
        <text>tRNA(His) + L-histidine + ATP = L-histidyl-tRNA(His) + AMP + diphosphate + H(+)</text>
        <dbReference type="Rhea" id="RHEA:17313"/>
        <dbReference type="Rhea" id="RHEA-COMP:9665"/>
        <dbReference type="Rhea" id="RHEA-COMP:9689"/>
        <dbReference type="ChEBI" id="CHEBI:15378"/>
        <dbReference type="ChEBI" id="CHEBI:30616"/>
        <dbReference type="ChEBI" id="CHEBI:33019"/>
        <dbReference type="ChEBI" id="CHEBI:57595"/>
        <dbReference type="ChEBI" id="CHEBI:78442"/>
        <dbReference type="ChEBI" id="CHEBI:78527"/>
        <dbReference type="ChEBI" id="CHEBI:456215"/>
        <dbReference type="EC" id="6.1.1.21"/>
    </reaction>
</comment>
<comment type="subunit">
    <text evidence="1">Homodimer.</text>
</comment>
<comment type="subcellular location">
    <subcellularLocation>
        <location evidence="1">Cytoplasm</location>
    </subcellularLocation>
</comment>
<comment type="similarity">
    <text evidence="1">Belongs to the class-II aminoacyl-tRNA synthetase family.</text>
</comment>
<dbReference type="EC" id="6.1.1.21" evidence="1"/>
<dbReference type="EMBL" id="AM181176">
    <property type="protein sequence ID" value="CAY52045.1"/>
    <property type="molecule type" value="Genomic_DNA"/>
</dbReference>
<dbReference type="RefSeq" id="WP_015885738.1">
    <property type="nucleotide sequence ID" value="NC_012660.1"/>
</dbReference>
<dbReference type="SMR" id="C3K1L3"/>
<dbReference type="STRING" id="294.SRM1_04644"/>
<dbReference type="PATRIC" id="fig|216595.4.peg.5191"/>
<dbReference type="eggNOG" id="COG0124">
    <property type="taxonomic scope" value="Bacteria"/>
</dbReference>
<dbReference type="HOGENOM" id="CLU_025113_1_1_6"/>
<dbReference type="OrthoDB" id="9800814at2"/>
<dbReference type="GO" id="GO:0005737">
    <property type="term" value="C:cytoplasm"/>
    <property type="evidence" value="ECO:0007669"/>
    <property type="project" value="UniProtKB-SubCell"/>
</dbReference>
<dbReference type="GO" id="GO:0005524">
    <property type="term" value="F:ATP binding"/>
    <property type="evidence" value="ECO:0007669"/>
    <property type="project" value="UniProtKB-UniRule"/>
</dbReference>
<dbReference type="GO" id="GO:0004821">
    <property type="term" value="F:histidine-tRNA ligase activity"/>
    <property type="evidence" value="ECO:0007669"/>
    <property type="project" value="UniProtKB-UniRule"/>
</dbReference>
<dbReference type="GO" id="GO:0006427">
    <property type="term" value="P:histidyl-tRNA aminoacylation"/>
    <property type="evidence" value="ECO:0007669"/>
    <property type="project" value="UniProtKB-UniRule"/>
</dbReference>
<dbReference type="CDD" id="cd00773">
    <property type="entry name" value="HisRS-like_core"/>
    <property type="match status" value="1"/>
</dbReference>
<dbReference type="CDD" id="cd00859">
    <property type="entry name" value="HisRS_anticodon"/>
    <property type="match status" value="1"/>
</dbReference>
<dbReference type="FunFam" id="3.30.930.10:FF:000005">
    <property type="entry name" value="Histidine--tRNA ligase"/>
    <property type="match status" value="1"/>
</dbReference>
<dbReference type="Gene3D" id="3.40.50.800">
    <property type="entry name" value="Anticodon-binding domain"/>
    <property type="match status" value="1"/>
</dbReference>
<dbReference type="Gene3D" id="3.30.930.10">
    <property type="entry name" value="Bira Bifunctional Protein, Domain 2"/>
    <property type="match status" value="1"/>
</dbReference>
<dbReference type="HAMAP" id="MF_00127">
    <property type="entry name" value="His_tRNA_synth"/>
    <property type="match status" value="1"/>
</dbReference>
<dbReference type="InterPro" id="IPR006195">
    <property type="entry name" value="aa-tRNA-synth_II"/>
</dbReference>
<dbReference type="InterPro" id="IPR045864">
    <property type="entry name" value="aa-tRNA-synth_II/BPL/LPL"/>
</dbReference>
<dbReference type="InterPro" id="IPR004154">
    <property type="entry name" value="Anticodon-bd"/>
</dbReference>
<dbReference type="InterPro" id="IPR036621">
    <property type="entry name" value="Anticodon-bd_dom_sf"/>
</dbReference>
<dbReference type="InterPro" id="IPR015807">
    <property type="entry name" value="His-tRNA-ligase"/>
</dbReference>
<dbReference type="InterPro" id="IPR041715">
    <property type="entry name" value="HisRS-like_core"/>
</dbReference>
<dbReference type="InterPro" id="IPR004516">
    <property type="entry name" value="HisRS/HisZ"/>
</dbReference>
<dbReference type="InterPro" id="IPR033656">
    <property type="entry name" value="HisRS_anticodon"/>
</dbReference>
<dbReference type="NCBIfam" id="TIGR00442">
    <property type="entry name" value="hisS"/>
    <property type="match status" value="1"/>
</dbReference>
<dbReference type="PANTHER" id="PTHR43707:SF1">
    <property type="entry name" value="HISTIDINE--TRNA LIGASE, MITOCHONDRIAL-RELATED"/>
    <property type="match status" value="1"/>
</dbReference>
<dbReference type="PANTHER" id="PTHR43707">
    <property type="entry name" value="HISTIDYL-TRNA SYNTHETASE"/>
    <property type="match status" value="1"/>
</dbReference>
<dbReference type="Pfam" id="PF03129">
    <property type="entry name" value="HGTP_anticodon"/>
    <property type="match status" value="1"/>
</dbReference>
<dbReference type="Pfam" id="PF13393">
    <property type="entry name" value="tRNA-synt_His"/>
    <property type="match status" value="1"/>
</dbReference>
<dbReference type="PIRSF" id="PIRSF001549">
    <property type="entry name" value="His-tRNA_synth"/>
    <property type="match status" value="1"/>
</dbReference>
<dbReference type="SUPFAM" id="SSF52954">
    <property type="entry name" value="Class II aaRS ABD-related"/>
    <property type="match status" value="1"/>
</dbReference>
<dbReference type="SUPFAM" id="SSF55681">
    <property type="entry name" value="Class II aaRS and biotin synthetases"/>
    <property type="match status" value="1"/>
</dbReference>
<dbReference type="PROSITE" id="PS50862">
    <property type="entry name" value="AA_TRNA_LIGASE_II"/>
    <property type="match status" value="1"/>
</dbReference>
<keyword id="KW-0030">Aminoacyl-tRNA synthetase</keyword>
<keyword id="KW-0067">ATP-binding</keyword>
<keyword id="KW-0963">Cytoplasm</keyword>
<keyword id="KW-0436">Ligase</keyword>
<keyword id="KW-0547">Nucleotide-binding</keyword>
<keyword id="KW-0648">Protein biosynthesis</keyword>
<sequence>MSKSLQAIRGMNDILPEQTPLWRYFESTVARLLDNYGYKQIRMPIVEFTELFKRSIGEVTDIVEKEMYTFEDRNGDSLTLRPEGTAACVRAVLEHGLTGGGQPQKLWYIGPMFRHERPQKGRYRQFHQIGLEVFNLDGPDIDAELIVLTWRLWGVLGIRDAVKLELNSLGTSESRGRYRVALVEYLSAHLDKLDEDSQRRLKTNPLRVLDTKNADTQAVLVNAPKMADYLDDESRTHFEGLKARLDAAGIPYVINPKLVRGLDYYSKTVFEWVTEKLGAQGTVCAGGRYDGLVEQMGGKPTTGVGFAMGIERLILLLETLEQVPEEISRQVDVYLCAFGEAAELAALALSEKVRDQLPNLRLQINAGAGSFKSQFKKADKSGALYALILGEDELAQQVIGFKPLRGQGEQQNIAFDALAAHLATCVVQG</sequence>
<gene>
    <name evidence="1" type="primary">hisS</name>
    <name type="ordered locus">PFLU_5056</name>
</gene>
<feature type="chain" id="PRO_1000203143" description="Histidine--tRNA ligase">
    <location>
        <begin position="1"/>
        <end position="429"/>
    </location>
</feature>
<evidence type="ECO:0000255" key="1">
    <source>
        <dbReference type="HAMAP-Rule" id="MF_00127"/>
    </source>
</evidence>